<dbReference type="EMBL" id="CP000111">
    <property type="protein sequence ID" value="ABB49315.1"/>
    <property type="molecule type" value="Genomic_DNA"/>
</dbReference>
<dbReference type="RefSeq" id="WP_011375818.1">
    <property type="nucleotide sequence ID" value="NC_007577.1"/>
</dbReference>
<dbReference type="SMR" id="Q31CT0"/>
<dbReference type="STRING" id="74546.PMT9312_0254"/>
<dbReference type="KEGG" id="pmi:PMT9312_0254"/>
<dbReference type="HOGENOM" id="CLU_205504_1_0_3"/>
<dbReference type="Proteomes" id="UP000002715">
    <property type="component" value="Chromosome"/>
</dbReference>
<dbReference type="GO" id="GO:0031676">
    <property type="term" value="C:plasma membrane-derived thylakoid membrane"/>
    <property type="evidence" value="ECO:0007669"/>
    <property type="project" value="UniProtKB-SubCell"/>
</dbReference>
<dbReference type="GO" id="GO:0015979">
    <property type="term" value="P:photosynthesis"/>
    <property type="evidence" value="ECO:0007669"/>
    <property type="project" value="InterPro"/>
</dbReference>
<dbReference type="HAMAP" id="MF_00293">
    <property type="entry name" value="PSII_PsbN"/>
    <property type="match status" value="1"/>
</dbReference>
<dbReference type="InterPro" id="IPR003398">
    <property type="entry name" value="PSII_PsbN"/>
</dbReference>
<dbReference type="NCBIfam" id="NF009650">
    <property type="entry name" value="PRK13183.1"/>
    <property type="match status" value="1"/>
</dbReference>
<dbReference type="Pfam" id="PF02468">
    <property type="entry name" value="PsbN"/>
    <property type="match status" value="1"/>
</dbReference>
<sequence length="50" mass="5253">MQTLSSAPDPAVSVAVTILAILLALTGFGLWTAFGPKAAKLTDPWDEHDD</sequence>
<gene>
    <name evidence="1" type="primary">psbN</name>
    <name type="ordered locus">PMT9312_0254</name>
</gene>
<feature type="chain" id="PRO_0000232785" description="Protein PsbN">
    <location>
        <begin position="1"/>
        <end position="50"/>
    </location>
</feature>
<feature type="transmembrane region" description="Helical" evidence="1">
    <location>
        <begin position="14"/>
        <end position="34"/>
    </location>
</feature>
<reference key="1">
    <citation type="journal article" date="2006" name="Science">
        <title>Genomic islands and the ecology and evolution of Prochlorococcus.</title>
        <authorList>
            <person name="Coleman M.L."/>
            <person name="Sullivan M.B."/>
            <person name="Martiny A.C."/>
            <person name="Steglich C."/>
            <person name="Barry K."/>
            <person name="Delong E.F."/>
            <person name="Chisholm S.W."/>
        </authorList>
    </citation>
    <scope>NUCLEOTIDE SEQUENCE [LARGE SCALE GENOMIC DNA]</scope>
    <source>
        <strain>MIT 9312</strain>
    </source>
</reference>
<evidence type="ECO:0000255" key="1">
    <source>
        <dbReference type="HAMAP-Rule" id="MF_00293"/>
    </source>
</evidence>
<comment type="function">
    <text evidence="1">May play a role in photosystem I and II biogenesis.</text>
</comment>
<comment type="subcellular location">
    <subcellularLocation>
        <location evidence="1">Cellular thylakoid membrane</location>
        <topology evidence="1">Single-pass membrane protein</topology>
    </subcellularLocation>
</comment>
<comment type="similarity">
    <text evidence="1">Belongs to the PsbN family.</text>
</comment>
<comment type="caution">
    <text evidence="1">Originally thought to be a component of PSII; based on experiments in Synechocystis, N.tabacum and barley, and its absence from PSII in T.elongatus and T.vulcanus, this is probably not true.</text>
</comment>
<accession>Q31CT0</accession>
<organism>
    <name type="scientific">Prochlorococcus marinus (strain MIT 9312)</name>
    <dbReference type="NCBI Taxonomy" id="74546"/>
    <lineage>
        <taxon>Bacteria</taxon>
        <taxon>Bacillati</taxon>
        <taxon>Cyanobacteriota</taxon>
        <taxon>Cyanophyceae</taxon>
        <taxon>Synechococcales</taxon>
        <taxon>Prochlorococcaceae</taxon>
        <taxon>Prochlorococcus</taxon>
    </lineage>
</organism>
<proteinExistence type="inferred from homology"/>
<keyword id="KW-0472">Membrane</keyword>
<keyword id="KW-0793">Thylakoid</keyword>
<keyword id="KW-0812">Transmembrane</keyword>
<keyword id="KW-1133">Transmembrane helix</keyword>
<protein>
    <recommendedName>
        <fullName evidence="1">Protein PsbN</fullName>
    </recommendedName>
</protein>
<name>PSBN_PROM9</name>